<proteinExistence type="evidence at protein level"/>
<accession>P97737</accession>
<accession>Q6PE07</accession>
<sequence length="476" mass="52575">MAPGPARISLGSQLLPMVPLLLLLRGAGCGHRGPSWSSLPSAAAGLQGDRDSQQSPGDAAAALGPGAQDMVAIHMLRLYEKYNRRGAPPGGGNTVRSFRARLEMIDQKPVYFFNLTSMQDSEMILTAAFHFYSEPPRWPRAREVFCKPRAKNASCRLLTPGLPARLHLIFRSLSQNTATQGLLRGAMALTPPPRGLWQAKDISSIIKAARRDGELLLSAQLDTGEKDPGVPRPSSHMPYILVYANDLAISEPNSVAVSLQRYDPFPAGDFEPGAAPNSSADPRVRRAAQVSKPLQDNELPGLDERPAPALHAQNFHKHEFWSSPFRALKPRTGRKDRKKKDQDTFTAASSQVLDFDEKTMQKARRRQWDEPRVCSRRYLKVDFADIGWNEWIISPKSFDAYYCAGACEFPMPKIVRPSNHATIQSIVRAVGIVPGIPEPCCVPDKMNSLGVLFLDENRNAVLKVYPNMSVETCACR</sequence>
<name>GDF10_MOUSE</name>
<evidence type="ECO:0000250" key="1"/>
<evidence type="ECO:0000255" key="2"/>
<evidence type="ECO:0000256" key="3">
    <source>
        <dbReference type="SAM" id="MobiDB-lite"/>
    </source>
</evidence>
<evidence type="ECO:0000269" key="4">
    <source>
    </source>
</evidence>
<evidence type="ECO:0000269" key="5">
    <source>
    </source>
</evidence>
<evidence type="ECO:0000269" key="6">
    <source>
    </source>
</evidence>
<evidence type="ECO:0000269" key="7">
    <source>
    </source>
</evidence>
<evidence type="ECO:0000269" key="8">
    <source>
    </source>
</evidence>
<evidence type="ECO:0000305" key="9"/>
<evidence type="ECO:0000312" key="10">
    <source>
        <dbReference type="MGI" id="MGI:95684"/>
    </source>
</evidence>
<comment type="function">
    <text evidence="5 6">Growth factor involved in osteogenesis and adipogenesis. Plays an inhibitory role in the process of osteoblast differentiation via SMAD2/3 pathway (PubMed:22155034). Plays an inhibitory role in the process of adipogenesis (PubMed:21712809).</text>
</comment>
<comment type="subunit">
    <text evidence="5 9">Homodimer or heterodimer. Can form a non-covalent complex of the mature region and the pro-region (PubMed:21712809).</text>
</comment>
<comment type="subcellular location">
    <subcellularLocation>
        <location evidence="5">Secreted</location>
    </subcellularLocation>
</comment>
<comment type="tissue specificity">
    <text evidence="4 6 7 8">Highly expressed in epididymal adipose tissue, brain, bone and aorta and to a lesser extent in liver and spleen. Expressed at higher levels in preadipocytes than in mature adipocytes (PubMed:21712809). Strongly expressed in glial cells of the cerebellum (PubMed:24963847).</text>
</comment>
<comment type="developmental stage">
    <text evidence="4">During embryogenes is expressed most prominently in developing skeletal structures both in the craniofacial region and in the vertebral column.</text>
</comment>
<comment type="disruption phenotype">
    <text evidence="4">No visible phenotype.</text>
</comment>
<comment type="miscellaneous">
    <text evidence="5">3T3-L1 cells endogenously secrete biologically active Gdf10 as a unique complex that contains both the pro-region and the mature region.</text>
</comment>
<comment type="similarity">
    <text evidence="9">Belongs to the TGF-beta family.</text>
</comment>
<organism>
    <name type="scientific">Mus musculus</name>
    <name type="common">Mouse</name>
    <dbReference type="NCBI Taxonomy" id="10090"/>
    <lineage>
        <taxon>Eukaryota</taxon>
        <taxon>Metazoa</taxon>
        <taxon>Chordata</taxon>
        <taxon>Craniata</taxon>
        <taxon>Vertebrata</taxon>
        <taxon>Euteleostomi</taxon>
        <taxon>Mammalia</taxon>
        <taxon>Eutheria</taxon>
        <taxon>Euarchontoglires</taxon>
        <taxon>Glires</taxon>
        <taxon>Rodentia</taxon>
        <taxon>Myomorpha</taxon>
        <taxon>Muroidea</taxon>
        <taxon>Muridae</taxon>
        <taxon>Murinae</taxon>
        <taxon>Mus</taxon>
        <taxon>Mus</taxon>
    </lineage>
</organism>
<reference key="1">
    <citation type="journal article" date="1995" name="Growth Factors">
        <title>Growth/differentiation factor-10: a new member of the transforming growth factor-beta superfamily related to bone morphogenetic protein-3.</title>
        <authorList>
            <person name="Cunningham N.S."/>
            <person name="Jenkins N.A."/>
            <person name="Gilbert D.J."/>
            <person name="Copeland N.G."/>
            <person name="Reddi A.H."/>
            <person name="Lee S.-J."/>
        </authorList>
    </citation>
    <scope>NUCLEOTIDE SEQUENCE [MRNA]</scope>
    <scope>TISSUE SPECIFICITY</scope>
    <source>
        <strain>CD-1</strain>
        <tissue>Uterus</tissue>
    </source>
</reference>
<reference key="2">
    <citation type="journal article" date="2004" name="Genome Res.">
        <title>The status, quality, and expansion of the NIH full-length cDNA project: the Mammalian Gene Collection (MGC).</title>
        <authorList>
            <consortium name="The MGC Project Team"/>
        </authorList>
    </citation>
    <scope>NUCLEOTIDE SEQUENCE [LARGE SCALE MRNA]</scope>
    <source>
        <strain>C57BL/6J</strain>
        <tissue>Brain</tissue>
    </source>
</reference>
<reference key="3">
    <citation type="journal article" date="1999" name="Dev. Biol.">
        <title>Characterization of GDF-10 expression patterns and null mice.</title>
        <authorList>
            <person name="Zhao R."/>
            <person name="Lawler A.M."/>
            <person name="Lee S.J."/>
        </authorList>
    </citation>
    <scope>DEVELOPMENTAL STAGE</scope>
    <scope>DISRUPTION PHENOTYPE</scope>
    <scope>TISSUE SPECIFICITY</scope>
</reference>
<reference key="4">
    <citation type="journal article" date="2012" name="Int. J. Obes. Relat. Metab. Disord.">
        <title>Bone morphogenetic protein-3b (BMP-3b) is expressed in adipocytes and inhibits adipogenesis as a unique complex.</title>
        <authorList>
            <person name="Hino J."/>
            <person name="Miyazawa T."/>
            <person name="Miyazato M."/>
            <person name="Kangawa K."/>
        </authorList>
    </citation>
    <scope>FUNCTION</scope>
    <scope>TISSUE SPECIFICITY</scope>
    <scope>SUBCELLULAR LOCATION</scope>
    <scope>SUBUNIT</scope>
</reference>
<reference key="5">
    <citation type="journal article" date="2012" name="Mol. Cell. Endocrinol.">
        <title>Bone morphogenetic protein-3b (BMP-3b) inhibits osteoblast differentiation via Smad2/3 pathway by counteracting Smad1/5/8 signaling.</title>
        <authorList>
            <person name="Matsumoto Y."/>
            <person name="Otsuka F."/>
            <person name="Hino J."/>
            <person name="Miyoshi T."/>
            <person name="Takano M."/>
            <person name="Miyazato M."/>
            <person name="Makino H."/>
            <person name="Kangawa K."/>
        </authorList>
    </citation>
    <scope>FUNCTION</scope>
</reference>
<reference key="6">
    <citation type="journal article" date="2014" name="Glia">
        <title>Growth and differentiation factor 10 (Gdf10) is involved in Bergmann glial cell development under Shh regulation.</title>
        <authorList>
            <person name="Mecklenburg N."/>
            <person name="Martinez-Lopez J.E."/>
            <person name="Moreno-Bravo J.A."/>
            <person name="Perez-Balaguer A."/>
            <person name="Puelles E."/>
            <person name="Martinez S."/>
        </authorList>
    </citation>
    <scope>TISSUE SPECIFICITY</scope>
</reference>
<keyword id="KW-0165">Cleavage on pair of basic residues</keyword>
<keyword id="KW-0202">Cytokine</keyword>
<keyword id="KW-1015">Disulfide bond</keyword>
<keyword id="KW-0325">Glycoprotein</keyword>
<keyword id="KW-0339">Growth factor</keyword>
<keyword id="KW-0892">Osteogenesis</keyword>
<keyword id="KW-1185">Reference proteome</keyword>
<keyword id="KW-0964">Secreted</keyword>
<keyword id="KW-0732">Signal</keyword>
<gene>
    <name evidence="10" type="primary">Gdf10</name>
    <name type="synonym">Bmp3b</name>
</gene>
<dbReference type="EMBL" id="S82648">
    <property type="protein sequence ID" value="AAB46753.1"/>
    <property type="molecule type" value="mRNA"/>
</dbReference>
<dbReference type="EMBL" id="BC058358">
    <property type="protein sequence ID" value="AAH58358.1"/>
    <property type="molecule type" value="mRNA"/>
</dbReference>
<dbReference type="CCDS" id="CCDS26927.1"/>
<dbReference type="RefSeq" id="NP_665684.2">
    <property type="nucleotide sequence ID" value="NM_145741.3"/>
</dbReference>
<dbReference type="SMR" id="P97737"/>
<dbReference type="FunCoup" id="P97737">
    <property type="interactions" value="706"/>
</dbReference>
<dbReference type="STRING" id="10090.ENSMUSP00000128621"/>
<dbReference type="GlyCosmos" id="P97737">
    <property type="glycosylation" value="4 sites, No reported glycans"/>
</dbReference>
<dbReference type="GlyGen" id="P97737">
    <property type="glycosylation" value="4 sites, 3 N-linked glycans (3 sites)"/>
</dbReference>
<dbReference type="PhosphoSitePlus" id="P97737"/>
<dbReference type="jPOST" id="P97737"/>
<dbReference type="PaxDb" id="10090-ENSMUSP00000128621"/>
<dbReference type="ProteomicsDB" id="267784"/>
<dbReference type="Antibodypedia" id="73579">
    <property type="antibodies" value="272 antibodies from 28 providers"/>
</dbReference>
<dbReference type="DNASU" id="14560"/>
<dbReference type="Ensembl" id="ENSMUST00000168727.3">
    <property type="protein sequence ID" value="ENSMUSP00000128621.2"/>
    <property type="gene ID" value="ENSMUSG00000021943.8"/>
</dbReference>
<dbReference type="GeneID" id="14560"/>
<dbReference type="KEGG" id="mmu:14560"/>
<dbReference type="UCSC" id="uc007tab.1">
    <property type="organism name" value="mouse"/>
</dbReference>
<dbReference type="AGR" id="MGI:95684"/>
<dbReference type="CTD" id="2662"/>
<dbReference type="MGI" id="MGI:95684">
    <property type="gene designation" value="Gdf10"/>
</dbReference>
<dbReference type="VEuPathDB" id="HostDB:ENSMUSG00000021943"/>
<dbReference type="eggNOG" id="KOG3900">
    <property type="taxonomic scope" value="Eukaryota"/>
</dbReference>
<dbReference type="GeneTree" id="ENSGT00940000157214"/>
<dbReference type="HOGENOM" id="CLU_020515_10_0_1"/>
<dbReference type="InParanoid" id="P97737"/>
<dbReference type="OMA" id="VHMLKLY"/>
<dbReference type="OrthoDB" id="5987191at2759"/>
<dbReference type="PhylomeDB" id="P97737"/>
<dbReference type="TreeFam" id="TF316134"/>
<dbReference type="BioGRID-ORCS" id="14560">
    <property type="hits" value="2 hits in 76 CRISPR screens"/>
</dbReference>
<dbReference type="ChiTaRS" id="Gdf10">
    <property type="organism name" value="mouse"/>
</dbReference>
<dbReference type="PRO" id="PR:P97737"/>
<dbReference type="Proteomes" id="UP000000589">
    <property type="component" value="Chromosome 14"/>
</dbReference>
<dbReference type="RNAct" id="P97737">
    <property type="molecule type" value="protein"/>
</dbReference>
<dbReference type="Bgee" id="ENSMUSG00000021943">
    <property type="expression patterns" value="Expressed in vault of skull and 230 other cell types or tissues"/>
</dbReference>
<dbReference type="GO" id="GO:0005615">
    <property type="term" value="C:extracellular space"/>
    <property type="evidence" value="ECO:0007669"/>
    <property type="project" value="UniProtKB-KW"/>
</dbReference>
<dbReference type="GO" id="GO:0005125">
    <property type="term" value="F:cytokine activity"/>
    <property type="evidence" value="ECO:0007669"/>
    <property type="project" value="UniProtKB-KW"/>
</dbReference>
<dbReference type="GO" id="GO:0008083">
    <property type="term" value="F:growth factor activity"/>
    <property type="evidence" value="ECO:0007669"/>
    <property type="project" value="UniProtKB-KW"/>
</dbReference>
<dbReference type="GO" id="GO:0021549">
    <property type="term" value="P:cerebellum development"/>
    <property type="evidence" value="ECO:0007669"/>
    <property type="project" value="Ensembl"/>
</dbReference>
<dbReference type="GO" id="GO:0045444">
    <property type="term" value="P:fat cell differentiation"/>
    <property type="evidence" value="ECO:0000315"/>
    <property type="project" value="UniProtKB"/>
</dbReference>
<dbReference type="GO" id="GO:0030279">
    <property type="term" value="P:negative regulation of ossification"/>
    <property type="evidence" value="ECO:0007669"/>
    <property type="project" value="Ensembl"/>
</dbReference>
<dbReference type="GO" id="GO:0001649">
    <property type="term" value="P:osteoblast differentiation"/>
    <property type="evidence" value="ECO:0007669"/>
    <property type="project" value="Ensembl"/>
</dbReference>
<dbReference type="GO" id="GO:0042698">
    <property type="term" value="P:ovulation cycle"/>
    <property type="evidence" value="ECO:0007669"/>
    <property type="project" value="Ensembl"/>
</dbReference>
<dbReference type="GO" id="GO:0045669">
    <property type="term" value="P:positive regulation of osteoblast differentiation"/>
    <property type="evidence" value="ECO:0007669"/>
    <property type="project" value="Ensembl"/>
</dbReference>
<dbReference type="GO" id="GO:1904373">
    <property type="term" value="P:response to kainic acid"/>
    <property type="evidence" value="ECO:0007669"/>
    <property type="project" value="Ensembl"/>
</dbReference>
<dbReference type="GO" id="GO:0071559">
    <property type="term" value="P:response to transforming growth factor beta"/>
    <property type="evidence" value="ECO:0007669"/>
    <property type="project" value="Ensembl"/>
</dbReference>
<dbReference type="CDD" id="cd19394">
    <property type="entry name" value="TGF_beta_GDF10"/>
    <property type="match status" value="1"/>
</dbReference>
<dbReference type="FunFam" id="2.10.90.10:FF:000008">
    <property type="entry name" value="Bone morphogenetic protein 3"/>
    <property type="match status" value="1"/>
</dbReference>
<dbReference type="Gene3D" id="2.10.90.10">
    <property type="entry name" value="Cystine-knot cytokines"/>
    <property type="match status" value="1"/>
</dbReference>
<dbReference type="InterPro" id="IPR017197">
    <property type="entry name" value="BMP3/BMP3B"/>
</dbReference>
<dbReference type="InterPro" id="IPR029034">
    <property type="entry name" value="Cystine-knot_cytokine"/>
</dbReference>
<dbReference type="InterPro" id="IPR001839">
    <property type="entry name" value="TGF-b_C"/>
</dbReference>
<dbReference type="InterPro" id="IPR015615">
    <property type="entry name" value="TGF-beta-rel"/>
</dbReference>
<dbReference type="InterPro" id="IPR017948">
    <property type="entry name" value="TGFb_CS"/>
</dbReference>
<dbReference type="PANTHER" id="PTHR11848:SF145">
    <property type="entry name" value="GROWTH_DIFFERENTIATION FACTOR 10"/>
    <property type="match status" value="1"/>
</dbReference>
<dbReference type="PANTHER" id="PTHR11848">
    <property type="entry name" value="TGF-BETA FAMILY"/>
    <property type="match status" value="1"/>
</dbReference>
<dbReference type="Pfam" id="PF00019">
    <property type="entry name" value="TGF_beta"/>
    <property type="match status" value="1"/>
</dbReference>
<dbReference type="PIRSF" id="PIRSF037403">
    <property type="entry name" value="BMP3/GDF10"/>
    <property type="match status" value="1"/>
</dbReference>
<dbReference type="SMART" id="SM00204">
    <property type="entry name" value="TGFB"/>
    <property type="match status" value="1"/>
</dbReference>
<dbReference type="SUPFAM" id="SSF57501">
    <property type="entry name" value="Cystine-knot cytokines"/>
    <property type="match status" value="1"/>
</dbReference>
<dbReference type="PROSITE" id="PS00250">
    <property type="entry name" value="TGF_BETA_1"/>
    <property type="match status" value="1"/>
</dbReference>
<dbReference type="PROSITE" id="PS51362">
    <property type="entry name" value="TGF_BETA_2"/>
    <property type="match status" value="1"/>
</dbReference>
<feature type="signal peptide" evidence="2">
    <location>
        <begin position="1"/>
        <end position="29"/>
    </location>
</feature>
<feature type="propeptide" id="PRO_0000033846" evidence="2">
    <location>
        <begin position="30"/>
        <end position="366"/>
    </location>
</feature>
<feature type="chain" id="PRO_0000033847" description="Growth/differentiation factor 10">
    <location>
        <begin position="367"/>
        <end position="476"/>
    </location>
</feature>
<feature type="region of interest" description="Disordered" evidence="3">
    <location>
        <begin position="39"/>
        <end position="63"/>
    </location>
</feature>
<feature type="region of interest" description="Disordered" evidence="3">
    <location>
        <begin position="268"/>
        <end position="301"/>
    </location>
</feature>
<feature type="glycosylation site" description="N-linked (GlcNAc...) asparagine" evidence="2">
    <location>
        <position position="114"/>
    </location>
</feature>
<feature type="glycosylation site" description="N-linked (GlcNAc...) asparagine" evidence="2">
    <location>
        <position position="152"/>
    </location>
</feature>
<feature type="glycosylation site" description="N-linked (GlcNAc...) asparagine" evidence="2">
    <location>
        <position position="277"/>
    </location>
</feature>
<feature type="glycosylation site" description="N-linked (GlcNAc...) asparagine" evidence="2">
    <location>
        <position position="467"/>
    </location>
</feature>
<feature type="disulfide bond" evidence="1">
    <location>
        <begin position="374"/>
        <end position="441"/>
    </location>
</feature>
<feature type="disulfide bond" evidence="1">
    <location>
        <begin position="403"/>
        <end position="473"/>
    </location>
</feature>
<feature type="disulfide bond" evidence="1">
    <location>
        <begin position="407"/>
        <end position="475"/>
    </location>
</feature>
<feature type="disulfide bond" description="Interchain" evidence="1">
    <location>
        <position position="440"/>
    </location>
</feature>
<feature type="sequence conflict" description="In Ref. 1; AAB46753." evidence="9" ref="1">
    <original>R</original>
    <variation>G</variation>
    <location>
        <position position="142"/>
    </location>
</feature>
<feature type="sequence conflict" description="In Ref. 1; AAB46753." evidence="9" ref="1">
    <original>G</original>
    <variation>A</variation>
    <location>
        <position position="333"/>
    </location>
</feature>
<protein>
    <recommendedName>
        <fullName>Growth/differentiation factor 10</fullName>
        <shortName>GDF-10</shortName>
    </recommendedName>
    <alternativeName>
        <fullName>Bone morphogenetic protein 3B</fullName>
        <shortName>BMP-3B</shortName>
    </alternativeName>
</protein>